<evidence type="ECO:0000255" key="1">
    <source>
        <dbReference type="HAMAP-Rule" id="MF_00151"/>
    </source>
</evidence>
<feature type="chain" id="PRO_0000156223" description="Phosphopantetheine adenylyltransferase">
    <location>
        <begin position="1"/>
        <end position="163"/>
    </location>
</feature>
<feature type="binding site" evidence="1">
    <location>
        <begin position="9"/>
        <end position="10"/>
    </location>
    <ligand>
        <name>ATP</name>
        <dbReference type="ChEBI" id="CHEBI:30616"/>
    </ligand>
</feature>
<feature type="binding site" evidence="1">
    <location>
        <position position="9"/>
    </location>
    <ligand>
        <name>substrate</name>
    </ligand>
</feature>
<feature type="binding site" evidence="1">
    <location>
        <position position="17"/>
    </location>
    <ligand>
        <name>ATP</name>
        <dbReference type="ChEBI" id="CHEBI:30616"/>
    </ligand>
</feature>
<feature type="binding site" evidence="1">
    <location>
        <position position="41"/>
    </location>
    <ligand>
        <name>substrate</name>
    </ligand>
</feature>
<feature type="binding site" evidence="1">
    <location>
        <position position="73"/>
    </location>
    <ligand>
        <name>substrate</name>
    </ligand>
</feature>
<feature type="binding site" evidence="1">
    <location>
        <position position="87"/>
    </location>
    <ligand>
        <name>substrate</name>
    </ligand>
</feature>
<feature type="binding site" evidence="1">
    <location>
        <begin position="88"/>
        <end position="90"/>
    </location>
    <ligand>
        <name>ATP</name>
        <dbReference type="ChEBI" id="CHEBI:30616"/>
    </ligand>
</feature>
<feature type="binding site" evidence="1">
    <location>
        <position position="98"/>
    </location>
    <ligand>
        <name>ATP</name>
        <dbReference type="ChEBI" id="CHEBI:30616"/>
    </ligand>
</feature>
<feature type="binding site" evidence="1">
    <location>
        <begin position="123"/>
        <end position="129"/>
    </location>
    <ligand>
        <name>ATP</name>
        <dbReference type="ChEBI" id="CHEBI:30616"/>
    </ligand>
</feature>
<feature type="site" description="Transition state stabilizer" evidence="1">
    <location>
        <position position="17"/>
    </location>
</feature>
<keyword id="KW-0067">ATP-binding</keyword>
<keyword id="KW-0173">Coenzyme A biosynthesis</keyword>
<keyword id="KW-0963">Cytoplasm</keyword>
<keyword id="KW-0460">Magnesium</keyword>
<keyword id="KW-0547">Nucleotide-binding</keyword>
<keyword id="KW-0548">Nucleotidyltransferase</keyword>
<keyword id="KW-1185">Reference proteome</keyword>
<keyword id="KW-0808">Transferase</keyword>
<accession>Q88VC8</accession>
<accession>F9UQ77</accession>
<organism>
    <name type="scientific">Lactiplantibacillus plantarum (strain ATCC BAA-793 / NCIMB 8826 / WCFS1)</name>
    <name type="common">Lactobacillus plantarum</name>
    <dbReference type="NCBI Taxonomy" id="220668"/>
    <lineage>
        <taxon>Bacteria</taxon>
        <taxon>Bacillati</taxon>
        <taxon>Bacillota</taxon>
        <taxon>Bacilli</taxon>
        <taxon>Lactobacillales</taxon>
        <taxon>Lactobacillaceae</taxon>
        <taxon>Lactiplantibacillus</taxon>
    </lineage>
</organism>
<name>COAD_LACPL</name>
<proteinExistence type="inferred from homology"/>
<gene>
    <name evidence="1" type="primary">coaD</name>
    <name type="synonym">kdtB</name>
    <name type="ordered locus">lp_2133</name>
</gene>
<protein>
    <recommendedName>
        <fullName evidence="1">Phosphopantetheine adenylyltransferase</fullName>
        <ecNumber evidence="1">2.7.7.3</ecNumber>
    </recommendedName>
    <alternativeName>
        <fullName evidence="1">Dephospho-CoA pyrophosphorylase</fullName>
    </alternativeName>
    <alternativeName>
        <fullName evidence="1">Pantetheine-phosphate adenylyltransferase</fullName>
        <shortName evidence="1">PPAT</shortName>
    </alternativeName>
</protein>
<sequence length="163" mass="18072">MVTAVFPGSFDPITRGHLDMIQRASRLVDRLIVAVMVNTSKQPLFTMTEKVAMISDELTGLPNVEVQAATGLTVDFMASVHATVLVRGLRNEQDFGYERDIAWMNKSLDETIETICLIARPPYAYFSSSLIKEVAKMGADVSKYVPTAVAQKLHQRLGTDQHD</sequence>
<dbReference type="EC" id="2.7.7.3" evidence="1"/>
<dbReference type="EMBL" id="AL935263">
    <property type="protein sequence ID" value="CCC79366.1"/>
    <property type="molecule type" value="Genomic_DNA"/>
</dbReference>
<dbReference type="RefSeq" id="WP_003640809.1">
    <property type="nucleotide sequence ID" value="NC_004567.2"/>
</dbReference>
<dbReference type="RefSeq" id="YP_004889880.1">
    <property type="nucleotide sequence ID" value="NC_004567.2"/>
</dbReference>
<dbReference type="SMR" id="Q88VC8"/>
<dbReference type="STRING" id="220668.lp_2133"/>
<dbReference type="EnsemblBacteria" id="CCC79366">
    <property type="protein sequence ID" value="CCC79366"/>
    <property type="gene ID" value="lp_2133"/>
</dbReference>
<dbReference type="KEGG" id="lpl:lp_2133"/>
<dbReference type="PATRIC" id="fig|220668.9.peg.1807"/>
<dbReference type="eggNOG" id="COG0669">
    <property type="taxonomic scope" value="Bacteria"/>
</dbReference>
<dbReference type="HOGENOM" id="CLU_100149_1_1_9"/>
<dbReference type="OrthoDB" id="9806661at2"/>
<dbReference type="PhylomeDB" id="Q88VC8"/>
<dbReference type="UniPathway" id="UPA00241">
    <property type="reaction ID" value="UER00355"/>
</dbReference>
<dbReference type="Proteomes" id="UP000000432">
    <property type="component" value="Chromosome"/>
</dbReference>
<dbReference type="GO" id="GO:0005737">
    <property type="term" value="C:cytoplasm"/>
    <property type="evidence" value="ECO:0007669"/>
    <property type="project" value="UniProtKB-SubCell"/>
</dbReference>
<dbReference type="GO" id="GO:0005524">
    <property type="term" value="F:ATP binding"/>
    <property type="evidence" value="ECO:0007669"/>
    <property type="project" value="UniProtKB-KW"/>
</dbReference>
<dbReference type="GO" id="GO:0004595">
    <property type="term" value="F:pantetheine-phosphate adenylyltransferase activity"/>
    <property type="evidence" value="ECO:0007669"/>
    <property type="project" value="UniProtKB-UniRule"/>
</dbReference>
<dbReference type="GO" id="GO:0015937">
    <property type="term" value="P:coenzyme A biosynthetic process"/>
    <property type="evidence" value="ECO:0007669"/>
    <property type="project" value="UniProtKB-UniRule"/>
</dbReference>
<dbReference type="CDD" id="cd02163">
    <property type="entry name" value="PPAT"/>
    <property type="match status" value="1"/>
</dbReference>
<dbReference type="Gene3D" id="3.40.50.620">
    <property type="entry name" value="HUPs"/>
    <property type="match status" value="1"/>
</dbReference>
<dbReference type="HAMAP" id="MF_00151">
    <property type="entry name" value="PPAT_bact"/>
    <property type="match status" value="1"/>
</dbReference>
<dbReference type="InterPro" id="IPR004821">
    <property type="entry name" value="Cyt_trans-like"/>
</dbReference>
<dbReference type="InterPro" id="IPR001980">
    <property type="entry name" value="PPAT"/>
</dbReference>
<dbReference type="InterPro" id="IPR014729">
    <property type="entry name" value="Rossmann-like_a/b/a_fold"/>
</dbReference>
<dbReference type="NCBIfam" id="TIGR01510">
    <property type="entry name" value="coaD_prev_kdtB"/>
    <property type="match status" value="1"/>
</dbReference>
<dbReference type="NCBIfam" id="TIGR00125">
    <property type="entry name" value="cyt_tran_rel"/>
    <property type="match status" value="1"/>
</dbReference>
<dbReference type="PANTHER" id="PTHR21342">
    <property type="entry name" value="PHOSPHOPANTETHEINE ADENYLYLTRANSFERASE"/>
    <property type="match status" value="1"/>
</dbReference>
<dbReference type="PANTHER" id="PTHR21342:SF1">
    <property type="entry name" value="PHOSPHOPANTETHEINE ADENYLYLTRANSFERASE"/>
    <property type="match status" value="1"/>
</dbReference>
<dbReference type="Pfam" id="PF01467">
    <property type="entry name" value="CTP_transf_like"/>
    <property type="match status" value="1"/>
</dbReference>
<dbReference type="PRINTS" id="PR01020">
    <property type="entry name" value="LPSBIOSNTHSS"/>
</dbReference>
<dbReference type="SUPFAM" id="SSF52374">
    <property type="entry name" value="Nucleotidylyl transferase"/>
    <property type="match status" value="1"/>
</dbReference>
<comment type="function">
    <text evidence="1">Reversibly transfers an adenylyl group from ATP to 4'-phosphopantetheine, yielding dephospho-CoA (dPCoA) and pyrophosphate.</text>
</comment>
<comment type="catalytic activity">
    <reaction evidence="1">
        <text>(R)-4'-phosphopantetheine + ATP + H(+) = 3'-dephospho-CoA + diphosphate</text>
        <dbReference type="Rhea" id="RHEA:19801"/>
        <dbReference type="ChEBI" id="CHEBI:15378"/>
        <dbReference type="ChEBI" id="CHEBI:30616"/>
        <dbReference type="ChEBI" id="CHEBI:33019"/>
        <dbReference type="ChEBI" id="CHEBI:57328"/>
        <dbReference type="ChEBI" id="CHEBI:61723"/>
        <dbReference type="EC" id="2.7.7.3"/>
    </reaction>
</comment>
<comment type="cofactor">
    <cofactor evidence="1">
        <name>Mg(2+)</name>
        <dbReference type="ChEBI" id="CHEBI:18420"/>
    </cofactor>
</comment>
<comment type="pathway">
    <text evidence="1">Cofactor biosynthesis; coenzyme A biosynthesis; CoA from (R)-pantothenate: step 4/5.</text>
</comment>
<comment type="subunit">
    <text evidence="1">Homohexamer.</text>
</comment>
<comment type="subcellular location">
    <subcellularLocation>
        <location evidence="1">Cytoplasm</location>
    </subcellularLocation>
</comment>
<comment type="similarity">
    <text evidence="1">Belongs to the bacterial CoaD family.</text>
</comment>
<reference key="1">
    <citation type="journal article" date="2003" name="Proc. Natl. Acad. Sci. U.S.A.">
        <title>Complete genome sequence of Lactobacillus plantarum WCFS1.</title>
        <authorList>
            <person name="Kleerebezem M."/>
            <person name="Boekhorst J."/>
            <person name="van Kranenburg R."/>
            <person name="Molenaar D."/>
            <person name="Kuipers O.P."/>
            <person name="Leer R."/>
            <person name="Tarchini R."/>
            <person name="Peters S.A."/>
            <person name="Sandbrink H.M."/>
            <person name="Fiers M.W.E.J."/>
            <person name="Stiekema W."/>
            <person name="Klein Lankhorst R.M."/>
            <person name="Bron P.A."/>
            <person name="Hoffer S.M."/>
            <person name="Nierop Groot M.N."/>
            <person name="Kerkhoven R."/>
            <person name="De Vries M."/>
            <person name="Ursing B."/>
            <person name="De Vos W.M."/>
            <person name="Siezen R.J."/>
        </authorList>
    </citation>
    <scope>NUCLEOTIDE SEQUENCE [LARGE SCALE GENOMIC DNA]</scope>
    <source>
        <strain>ATCC BAA-793 / NCIMB 8826 / WCFS1</strain>
    </source>
</reference>
<reference key="2">
    <citation type="journal article" date="2012" name="J. Bacteriol.">
        <title>Complete resequencing and reannotation of the Lactobacillus plantarum WCFS1 genome.</title>
        <authorList>
            <person name="Siezen R.J."/>
            <person name="Francke C."/>
            <person name="Renckens B."/>
            <person name="Boekhorst J."/>
            <person name="Wels M."/>
            <person name="Kleerebezem M."/>
            <person name="van Hijum S.A."/>
        </authorList>
    </citation>
    <scope>NUCLEOTIDE SEQUENCE [LARGE SCALE GENOMIC DNA]</scope>
    <scope>GENOME REANNOTATION</scope>
    <source>
        <strain>ATCC BAA-793 / NCIMB 8826 / WCFS1</strain>
    </source>
</reference>